<protein>
    <recommendedName>
        <fullName evidence="1">UPF0346 protein SZO_05010</fullName>
    </recommendedName>
</protein>
<gene>
    <name type="ordered locus">SZO_05010</name>
</gene>
<dbReference type="EMBL" id="FM204884">
    <property type="protein sequence ID" value="CAW98457.1"/>
    <property type="molecule type" value="Genomic_DNA"/>
</dbReference>
<dbReference type="RefSeq" id="WP_012677569.1">
    <property type="nucleotide sequence ID" value="NZ_CP065054.1"/>
</dbReference>
<dbReference type="SMR" id="C0MCD2"/>
<dbReference type="KEGG" id="seq:SZO_05010"/>
<dbReference type="eggNOG" id="COG4479">
    <property type="taxonomic scope" value="Bacteria"/>
</dbReference>
<dbReference type="HOGENOM" id="CLU_177534_1_0_9"/>
<dbReference type="Proteomes" id="UP000001368">
    <property type="component" value="Chromosome"/>
</dbReference>
<dbReference type="Gene3D" id="1.10.150.260">
    <property type="entry name" value="YozE SAM-like"/>
    <property type="match status" value="1"/>
</dbReference>
<dbReference type="HAMAP" id="MF_01538">
    <property type="entry name" value="UPF0346"/>
    <property type="match status" value="1"/>
</dbReference>
<dbReference type="InterPro" id="IPR010673">
    <property type="entry name" value="UPF0346"/>
</dbReference>
<dbReference type="InterPro" id="IPR023089">
    <property type="entry name" value="YozE_SAM-like"/>
</dbReference>
<dbReference type="InterPro" id="IPR036806">
    <property type="entry name" value="YozE_SAM-like_sf"/>
</dbReference>
<dbReference type="NCBIfam" id="NF010193">
    <property type="entry name" value="PRK13672.1"/>
    <property type="match status" value="1"/>
</dbReference>
<dbReference type="Pfam" id="PF06855">
    <property type="entry name" value="YozE_SAM_like"/>
    <property type="match status" value="1"/>
</dbReference>
<dbReference type="PIRSF" id="PIRSF037262">
    <property type="entry name" value="UCP037262"/>
    <property type="match status" value="1"/>
</dbReference>
<dbReference type="SUPFAM" id="SSF140652">
    <property type="entry name" value="YozE-like"/>
    <property type="match status" value="1"/>
</dbReference>
<comment type="similarity">
    <text evidence="1">Belongs to the UPF0346 family.</text>
</comment>
<reference key="1">
    <citation type="journal article" date="2009" name="PLoS Pathog.">
        <title>Genomic evidence for the evolution of Streptococcus equi: host restriction, increased virulence, and genetic exchange with human pathogens.</title>
        <authorList>
            <person name="Holden M.T.G."/>
            <person name="Heather Z."/>
            <person name="Paillot R."/>
            <person name="Steward K.F."/>
            <person name="Webb K."/>
            <person name="Ainslie F."/>
            <person name="Jourdan T."/>
            <person name="Bason N.C."/>
            <person name="Holroyd N.E."/>
            <person name="Mungall K."/>
            <person name="Quail M.A."/>
            <person name="Sanders M."/>
            <person name="Simmonds M."/>
            <person name="Willey D."/>
            <person name="Brooks K."/>
            <person name="Aanensen D.M."/>
            <person name="Spratt B.G."/>
            <person name="Jolley K.A."/>
            <person name="Maiden M.C.J."/>
            <person name="Kehoe M."/>
            <person name="Chanter N."/>
            <person name="Bentley S.D."/>
            <person name="Robinson C."/>
            <person name="Maskell D.J."/>
            <person name="Parkhill J."/>
            <person name="Waller A.S."/>
        </authorList>
    </citation>
    <scope>NUCLEOTIDE SEQUENCE [LARGE SCALE GENOMIC DNA]</scope>
    <source>
        <strain>H70</strain>
    </source>
</reference>
<organism>
    <name type="scientific">Streptococcus equi subsp. zooepidemicus (strain H70)</name>
    <dbReference type="NCBI Taxonomy" id="553483"/>
    <lineage>
        <taxon>Bacteria</taxon>
        <taxon>Bacillati</taxon>
        <taxon>Bacillota</taxon>
        <taxon>Bacilli</taxon>
        <taxon>Lactobacillales</taxon>
        <taxon>Streptococcaceae</taxon>
        <taxon>Streptococcus</taxon>
    </lineage>
</organism>
<feature type="chain" id="PRO_1000215420" description="UPF0346 protein SZO_05010">
    <location>
        <begin position="1"/>
        <end position="71"/>
    </location>
</feature>
<sequence length="71" mass="8416">MRKAFYTWLMAQRNSTSNKPAALLADLVFEDTTFPKHTDDFETISRYLEEEASFSFNLGQFDQIWEDYLSH</sequence>
<evidence type="ECO:0000255" key="1">
    <source>
        <dbReference type="HAMAP-Rule" id="MF_01538"/>
    </source>
</evidence>
<proteinExistence type="inferred from homology"/>
<accession>C0MCD2</accession>
<name>Y501_STRS7</name>